<protein>
    <recommendedName>
        <fullName evidence="1">2-C-methyl-D-erythritol 2,4-cyclodiphosphate synthase</fullName>
        <shortName evidence="1">MECDP-synthase</shortName>
        <shortName evidence="1">MECPP-synthase</shortName>
        <shortName evidence="1">MECPS</shortName>
        <ecNumber evidence="1">4.6.1.12</ecNumber>
    </recommendedName>
</protein>
<keyword id="KW-0414">Isoprene biosynthesis</keyword>
<keyword id="KW-0456">Lyase</keyword>
<keyword id="KW-0479">Metal-binding</keyword>
<proteinExistence type="inferred from homology"/>
<sequence>MNTTPRIGLGVDVHPIQPGRPCRLLGLLFDDADGCAGHSDGDVGAHALCDAVLSAAGLGDVGAVFGVDDPRWAGVSGADMLRHVADLTARHGFRVGNAAVQVIGNRPKVGPRRAEAQRVLSELLGAPVSVAATTTDGLGLTGRGEGLAAIATALVVPTG</sequence>
<feature type="chain" id="PRO_1000022852" description="2-C-methyl-D-erythritol 2,4-cyclodiphosphate synthase">
    <location>
        <begin position="1"/>
        <end position="159"/>
    </location>
</feature>
<feature type="binding site" evidence="1">
    <location>
        <begin position="12"/>
        <end position="14"/>
    </location>
    <ligand>
        <name>4-CDP-2-C-methyl-D-erythritol 2-phosphate</name>
        <dbReference type="ChEBI" id="CHEBI:57919"/>
    </ligand>
</feature>
<feature type="binding site" evidence="1">
    <location>
        <position position="12"/>
    </location>
    <ligand>
        <name>a divalent metal cation</name>
        <dbReference type="ChEBI" id="CHEBI:60240"/>
    </ligand>
</feature>
<feature type="binding site" evidence="1">
    <location>
        <position position="14"/>
    </location>
    <ligand>
        <name>a divalent metal cation</name>
        <dbReference type="ChEBI" id="CHEBI:60240"/>
    </ligand>
</feature>
<feature type="binding site" evidence="1">
    <location>
        <begin position="38"/>
        <end position="39"/>
    </location>
    <ligand>
        <name>4-CDP-2-C-methyl-D-erythritol 2-phosphate</name>
        <dbReference type="ChEBI" id="CHEBI:57919"/>
    </ligand>
</feature>
<feature type="binding site" evidence="1">
    <location>
        <position position="46"/>
    </location>
    <ligand>
        <name>a divalent metal cation</name>
        <dbReference type="ChEBI" id="CHEBI:60240"/>
    </ligand>
</feature>
<feature type="binding site" evidence="1">
    <location>
        <begin position="60"/>
        <end position="62"/>
    </location>
    <ligand>
        <name>4-CDP-2-C-methyl-D-erythritol 2-phosphate</name>
        <dbReference type="ChEBI" id="CHEBI:57919"/>
    </ligand>
</feature>
<feature type="binding site" evidence="1">
    <location>
        <begin position="133"/>
        <end position="136"/>
    </location>
    <ligand>
        <name>4-CDP-2-C-methyl-D-erythritol 2-phosphate</name>
        <dbReference type="ChEBI" id="CHEBI:57919"/>
    </ligand>
</feature>
<feature type="binding site" evidence="1">
    <location>
        <position position="143"/>
    </location>
    <ligand>
        <name>4-CDP-2-C-methyl-D-erythritol 2-phosphate</name>
        <dbReference type="ChEBI" id="CHEBI:57919"/>
    </ligand>
</feature>
<feature type="site" description="Transition state stabilizer" evidence="1">
    <location>
        <position position="38"/>
    </location>
</feature>
<feature type="site" description="Transition state stabilizer" evidence="1">
    <location>
        <position position="134"/>
    </location>
</feature>
<accession>A0QAB4</accession>
<evidence type="ECO:0000255" key="1">
    <source>
        <dbReference type="HAMAP-Rule" id="MF_00107"/>
    </source>
</evidence>
<name>ISPF_MYCA1</name>
<organism>
    <name type="scientific">Mycobacterium avium (strain 104)</name>
    <dbReference type="NCBI Taxonomy" id="243243"/>
    <lineage>
        <taxon>Bacteria</taxon>
        <taxon>Bacillati</taxon>
        <taxon>Actinomycetota</taxon>
        <taxon>Actinomycetes</taxon>
        <taxon>Mycobacteriales</taxon>
        <taxon>Mycobacteriaceae</taxon>
        <taxon>Mycobacterium</taxon>
        <taxon>Mycobacterium avium complex (MAC)</taxon>
    </lineage>
</organism>
<reference key="1">
    <citation type="submission" date="2006-10" db="EMBL/GenBank/DDBJ databases">
        <authorList>
            <person name="Fleischmann R.D."/>
            <person name="Dodson R.J."/>
            <person name="Haft D.H."/>
            <person name="Merkel J.S."/>
            <person name="Nelson W.C."/>
            <person name="Fraser C.M."/>
        </authorList>
    </citation>
    <scope>NUCLEOTIDE SEQUENCE [LARGE SCALE GENOMIC DNA]</scope>
    <source>
        <strain>104</strain>
    </source>
</reference>
<comment type="function">
    <text evidence="1">Involved in the biosynthesis of isopentenyl diphosphate (IPP) and dimethylallyl diphosphate (DMAPP), two major building blocks of isoprenoid compounds. Catalyzes the conversion of 4-diphosphocytidyl-2-C-methyl-D-erythritol 2-phosphate (CDP-ME2P) to 2-C-methyl-D-erythritol 2,4-cyclodiphosphate (ME-CPP) with a corresponding release of cytidine 5-monophosphate (CMP).</text>
</comment>
<comment type="catalytic activity">
    <reaction evidence="1">
        <text>4-CDP-2-C-methyl-D-erythritol 2-phosphate = 2-C-methyl-D-erythritol 2,4-cyclic diphosphate + CMP</text>
        <dbReference type="Rhea" id="RHEA:23864"/>
        <dbReference type="ChEBI" id="CHEBI:57919"/>
        <dbReference type="ChEBI" id="CHEBI:58483"/>
        <dbReference type="ChEBI" id="CHEBI:60377"/>
        <dbReference type="EC" id="4.6.1.12"/>
    </reaction>
</comment>
<comment type="cofactor">
    <cofactor evidence="1">
        <name>a divalent metal cation</name>
        <dbReference type="ChEBI" id="CHEBI:60240"/>
    </cofactor>
    <text evidence="1">Binds 1 divalent metal cation per subunit.</text>
</comment>
<comment type="pathway">
    <text evidence="1">Isoprenoid biosynthesis; isopentenyl diphosphate biosynthesis via DXP pathway; isopentenyl diphosphate from 1-deoxy-D-xylulose 5-phosphate: step 4/6.</text>
</comment>
<comment type="subunit">
    <text evidence="1">Homotrimer.</text>
</comment>
<comment type="similarity">
    <text evidence="1">Belongs to the IspF family.</text>
</comment>
<gene>
    <name evidence="1" type="primary">ispF</name>
    <name type="ordered locus">MAV_0572</name>
</gene>
<dbReference type="EC" id="4.6.1.12" evidence="1"/>
<dbReference type="EMBL" id="CP000479">
    <property type="protein sequence ID" value="ABK65471.1"/>
    <property type="molecule type" value="Genomic_DNA"/>
</dbReference>
<dbReference type="RefSeq" id="WP_003875634.1">
    <property type="nucleotide sequence ID" value="NC_008595.1"/>
</dbReference>
<dbReference type="SMR" id="A0QAB4"/>
<dbReference type="KEGG" id="mav:MAV_0572"/>
<dbReference type="HOGENOM" id="CLU_084630_1_0_11"/>
<dbReference type="UniPathway" id="UPA00056">
    <property type="reaction ID" value="UER00095"/>
</dbReference>
<dbReference type="Proteomes" id="UP000001574">
    <property type="component" value="Chromosome"/>
</dbReference>
<dbReference type="GO" id="GO:0008685">
    <property type="term" value="F:2-C-methyl-D-erythritol 2,4-cyclodiphosphate synthase activity"/>
    <property type="evidence" value="ECO:0007669"/>
    <property type="project" value="UniProtKB-UniRule"/>
</dbReference>
<dbReference type="GO" id="GO:0046872">
    <property type="term" value="F:metal ion binding"/>
    <property type="evidence" value="ECO:0007669"/>
    <property type="project" value="UniProtKB-KW"/>
</dbReference>
<dbReference type="GO" id="GO:0019288">
    <property type="term" value="P:isopentenyl diphosphate biosynthetic process, methylerythritol 4-phosphate pathway"/>
    <property type="evidence" value="ECO:0007669"/>
    <property type="project" value="UniProtKB-UniRule"/>
</dbReference>
<dbReference type="GO" id="GO:0016114">
    <property type="term" value="P:terpenoid biosynthetic process"/>
    <property type="evidence" value="ECO:0007669"/>
    <property type="project" value="InterPro"/>
</dbReference>
<dbReference type="CDD" id="cd00554">
    <property type="entry name" value="MECDP_synthase"/>
    <property type="match status" value="1"/>
</dbReference>
<dbReference type="FunFam" id="3.30.1330.50:FF:000003">
    <property type="entry name" value="2-C-methyl-D-erythritol 2,4-cyclodiphosphate synthase"/>
    <property type="match status" value="1"/>
</dbReference>
<dbReference type="Gene3D" id="3.30.1330.50">
    <property type="entry name" value="2-C-methyl-D-erythritol 2,4-cyclodiphosphate synthase"/>
    <property type="match status" value="1"/>
</dbReference>
<dbReference type="HAMAP" id="MF_00107">
    <property type="entry name" value="IspF"/>
    <property type="match status" value="1"/>
</dbReference>
<dbReference type="InterPro" id="IPR003526">
    <property type="entry name" value="MECDP_synthase"/>
</dbReference>
<dbReference type="InterPro" id="IPR020555">
    <property type="entry name" value="MECDP_synthase_CS"/>
</dbReference>
<dbReference type="InterPro" id="IPR036571">
    <property type="entry name" value="MECDP_synthase_sf"/>
</dbReference>
<dbReference type="NCBIfam" id="TIGR00151">
    <property type="entry name" value="ispF"/>
    <property type="match status" value="1"/>
</dbReference>
<dbReference type="PANTHER" id="PTHR43181">
    <property type="entry name" value="2-C-METHYL-D-ERYTHRITOL 2,4-CYCLODIPHOSPHATE SYNTHASE, CHLOROPLASTIC"/>
    <property type="match status" value="1"/>
</dbReference>
<dbReference type="PANTHER" id="PTHR43181:SF1">
    <property type="entry name" value="2-C-METHYL-D-ERYTHRITOL 2,4-CYCLODIPHOSPHATE SYNTHASE, CHLOROPLASTIC"/>
    <property type="match status" value="1"/>
</dbReference>
<dbReference type="Pfam" id="PF02542">
    <property type="entry name" value="YgbB"/>
    <property type="match status" value="1"/>
</dbReference>
<dbReference type="SUPFAM" id="SSF69765">
    <property type="entry name" value="IpsF-like"/>
    <property type="match status" value="1"/>
</dbReference>
<dbReference type="PROSITE" id="PS01350">
    <property type="entry name" value="ISPF"/>
    <property type="match status" value="1"/>
</dbReference>